<reference key="1">
    <citation type="journal article" date="1991" name="Biochem. J.">
        <title>Rattlesnake cytochrome c. A re-appraisal of the reported amino acid sequence.</title>
        <authorList>
            <person name="Ambler R.P."/>
            <person name="Daniel M."/>
        </authorList>
    </citation>
    <scope>PROTEIN SEQUENCE OF 2-105</scope>
    <scope>ACETYLATION AT GLY-2</scope>
</reference>
<accession>P68519</accession>
<accession>P00023</accession>
<name>CYC_CROVV</name>
<feature type="initiator methionine" description="Removed" evidence="1">
    <location>
        <position position="1"/>
    </location>
</feature>
<feature type="chain" id="PRO_0000108247" description="Cytochrome c">
    <location>
        <begin position="2"/>
        <end position="105"/>
    </location>
</feature>
<feature type="binding site" description="covalent">
    <location>
        <position position="15"/>
    </location>
    <ligand>
        <name>heme c</name>
        <dbReference type="ChEBI" id="CHEBI:61717"/>
    </ligand>
</feature>
<feature type="binding site" description="covalent">
    <location>
        <position position="18"/>
    </location>
    <ligand>
        <name>heme c</name>
        <dbReference type="ChEBI" id="CHEBI:61717"/>
    </ligand>
</feature>
<feature type="binding site" description="axial binding residue">
    <location>
        <position position="19"/>
    </location>
    <ligand>
        <name>heme c</name>
        <dbReference type="ChEBI" id="CHEBI:61717"/>
    </ligand>
    <ligandPart>
        <name>Fe</name>
        <dbReference type="ChEBI" id="CHEBI:18248"/>
    </ligandPart>
</feature>
<feature type="binding site" description="axial binding residue">
    <location>
        <position position="81"/>
    </location>
    <ligand>
        <name>heme c</name>
        <dbReference type="ChEBI" id="CHEBI:61717"/>
    </ligand>
    <ligandPart>
        <name>Fe</name>
        <dbReference type="ChEBI" id="CHEBI:18248"/>
    </ligandPart>
</feature>
<feature type="modified residue" description="N-acetylglycine" evidence="1">
    <location>
        <position position="2"/>
    </location>
</feature>
<evidence type="ECO:0000269" key="1">
    <source>
    </source>
</evidence>
<evidence type="ECO:0000305" key="2"/>
<keyword id="KW-0007">Acetylation</keyword>
<keyword id="KW-0903">Direct protein sequencing</keyword>
<keyword id="KW-0249">Electron transport</keyword>
<keyword id="KW-0349">Heme</keyword>
<keyword id="KW-0408">Iron</keyword>
<keyword id="KW-0479">Metal-binding</keyword>
<keyword id="KW-0496">Mitochondrion</keyword>
<keyword id="KW-0679">Respiratory chain</keyword>
<keyword id="KW-0813">Transport</keyword>
<comment type="function">
    <text>Electron carrier protein. The oxidized form of the cytochrome c heme group can accept an electron from the heme group of the cytochrome c1 subunit of cytochrome reductase. Cytochrome c then transfers this electron to the cytochrome oxidase complex, the final protein carrier in the mitochondrial electron-transport chain.</text>
</comment>
<comment type="subcellular location">
    <subcellularLocation>
        <location>Mitochondrion intermembrane space</location>
    </subcellularLocation>
    <text>Loosely associated with the inner membrane.</text>
</comment>
<comment type="PTM">
    <text>Binds 1 heme c group covalently per subunit.</text>
</comment>
<comment type="similarity">
    <text evidence="2">Belongs to the cytochrome c family.</text>
</comment>
<comment type="online information" name="Protein Spotlight">
    <link uri="https://www.proteinspotlight.org/back_issues/076"/>
    <text>Life shuttle - Issue 76 of November 2006</text>
</comment>
<organism>
    <name type="scientific">Crotalus viridis viridis</name>
    <name type="common">Prairie rattlesnake</name>
    <dbReference type="NCBI Taxonomy" id="8742"/>
    <lineage>
        <taxon>Eukaryota</taxon>
        <taxon>Metazoa</taxon>
        <taxon>Chordata</taxon>
        <taxon>Craniata</taxon>
        <taxon>Vertebrata</taxon>
        <taxon>Euteleostomi</taxon>
        <taxon>Lepidosauria</taxon>
        <taxon>Squamata</taxon>
        <taxon>Bifurcata</taxon>
        <taxon>Unidentata</taxon>
        <taxon>Episquamata</taxon>
        <taxon>Toxicofera</taxon>
        <taxon>Serpentes</taxon>
        <taxon>Colubroidea</taxon>
        <taxon>Viperidae</taxon>
        <taxon>Crotalinae</taxon>
        <taxon>Crotalus</taxon>
    </lineage>
</organism>
<protein>
    <recommendedName>
        <fullName>Cytochrome c</fullName>
    </recommendedName>
</protein>
<dbReference type="PIR" id="S14358">
    <property type="entry name" value="CCRSW"/>
</dbReference>
<dbReference type="SMR" id="P68519"/>
<dbReference type="iPTMnet" id="P68519"/>
<dbReference type="GO" id="GO:0005758">
    <property type="term" value="C:mitochondrial intermembrane space"/>
    <property type="evidence" value="ECO:0007669"/>
    <property type="project" value="UniProtKB-SubCell"/>
</dbReference>
<dbReference type="GO" id="GO:0009055">
    <property type="term" value="F:electron transfer activity"/>
    <property type="evidence" value="ECO:0007669"/>
    <property type="project" value="InterPro"/>
</dbReference>
<dbReference type="GO" id="GO:0020037">
    <property type="term" value="F:heme binding"/>
    <property type="evidence" value="ECO:0007669"/>
    <property type="project" value="InterPro"/>
</dbReference>
<dbReference type="GO" id="GO:0046872">
    <property type="term" value="F:metal ion binding"/>
    <property type="evidence" value="ECO:0007669"/>
    <property type="project" value="UniProtKB-KW"/>
</dbReference>
<dbReference type="FunFam" id="1.10.760.10:FF:000001">
    <property type="entry name" value="Cytochrome c iso-1"/>
    <property type="match status" value="1"/>
</dbReference>
<dbReference type="Gene3D" id="1.10.760.10">
    <property type="entry name" value="Cytochrome c-like domain"/>
    <property type="match status" value="1"/>
</dbReference>
<dbReference type="InterPro" id="IPR009056">
    <property type="entry name" value="Cyt_c-like_dom"/>
</dbReference>
<dbReference type="InterPro" id="IPR036909">
    <property type="entry name" value="Cyt_c-like_dom_sf"/>
</dbReference>
<dbReference type="InterPro" id="IPR002327">
    <property type="entry name" value="Cyt_c_1A/1B"/>
</dbReference>
<dbReference type="PANTHER" id="PTHR11961">
    <property type="entry name" value="CYTOCHROME C"/>
    <property type="match status" value="1"/>
</dbReference>
<dbReference type="Pfam" id="PF00034">
    <property type="entry name" value="Cytochrom_C"/>
    <property type="match status" value="1"/>
</dbReference>
<dbReference type="PRINTS" id="PR00604">
    <property type="entry name" value="CYTCHRMECIAB"/>
</dbReference>
<dbReference type="SUPFAM" id="SSF46626">
    <property type="entry name" value="Cytochrome c"/>
    <property type="match status" value="1"/>
</dbReference>
<dbReference type="PROSITE" id="PS51007">
    <property type="entry name" value="CYTC"/>
    <property type="match status" value="1"/>
</dbReference>
<sequence length="105" mass="11587">MGDVEKGKKIFSMKCGTCHTVEEGGKHKTGPNLHGLFGRKTGQAVGYSYTAANKNKGIIWGDDTLMEYLENPKKYIPGTKMVFTGLKSKKERTDLIAYLKEATAK</sequence>
<proteinExistence type="evidence at protein level"/>